<feature type="chain" id="PRO_0000206027" description="Transcription attenuation protein MtrB">
    <location>
        <begin position="1"/>
        <end position="74"/>
    </location>
</feature>
<feature type="strand" evidence="2">
    <location>
        <begin position="7"/>
        <end position="14"/>
    </location>
</feature>
<feature type="strand" evidence="2">
    <location>
        <begin position="17"/>
        <end position="23"/>
    </location>
</feature>
<feature type="strand" evidence="2">
    <location>
        <begin position="25"/>
        <end position="27"/>
    </location>
</feature>
<feature type="strand" evidence="2">
    <location>
        <begin position="30"/>
        <end position="36"/>
    </location>
</feature>
<feature type="strand" evidence="2">
    <location>
        <begin position="41"/>
        <end position="45"/>
    </location>
</feature>
<feature type="strand" evidence="2">
    <location>
        <begin position="48"/>
        <end position="63"/>
    </location>
</feature>
<feature type="strand" evidence="2">
    <location>
        <begin position="66"/>
        <end position="68"/>
    </location>
</feature>
<gene>
    <name type="primary">mtrB</name>
</gene>
<comment type="function">
    <text>Required for transcription attenuation control in the Trp operon. This trans-acting factor seems to recognize a 10 bases nucleotide sequence in the Trp leader transcript causing transcription termination. Binds the leader RNA only in presence of L-tryptophan.</text>
</comment>
<comment type="subunit">
    <text>Oligomer of 11 identical subunits arranged in doughnut-like structure.</text>
</comment>
<comment type="interaction">
    <interactant intactId="EBI-15582912">
        <id>Q9X6J6</id>
    </interactant>
    <interactant intactId="EBI-15582912">
        <id>Q9X6J6</id>
        <label>mtrB</label>
    </interactant>
    <organismsDiffer>false</organismsDiffer>
    <experiments>4</experiments>
</comment>
<comment type="interaction">
    <interactant intactId="EBI-15582912">
        <id>Q9X6J6</id>
    </interactant>
    <interactant intactId="EBI-15753070">
        <id>O31466</id>
        <label>rtpA</label>
    </interactant>
    <organismsDiffer>true</organismsDiffer>
    <experiments>3</experiments>
</comment>
<comment type="similarity">
    <text evidence="1">Belongs to the MtrB family.</text>
</comment>
<accession>Q9X6J6</accession>
<organism>
    <name type="scientific">Geobacillus stearothermophilus</name>
    <name type="common">Bacillus stearothermophilus</name>
    <dbReference type="NCBI Taxonomy" id="1422"/>
    <lineage>
        <taxon>Bacteria</taxon>
        <taxon>Bacillati</taxon>
        <taxon>Bacillota</taxon>
        <taxon>Bacilli</taxon>
        <taxon>Bacillales</taxon>
        <taxon>Anoxybacillaceae</taxon>
        <taxon>Geobacillus</taxon>
    </lineage>
</organism>
<protein>
    <recommendedName>
        <fullName>Transcription attenuation protein MtrB</fullName>
    </recommendedName>
    <alternativeName>
        <fullName>Trp RNA-binding attenuation protein</fullName>
        <shortName>TRAP</shortName>
    </alternativeName>
    <alternativeName>
        <fullName>Tryptophan RNA-binding attenuator protein</fullName>
    </alternativeName>
</protein>
<keyword id="KW-0002">3D-structure</keyword>
<keyword id="KW-0694">RNA-binding</keyword>
<keyword id="KW-0804">Transcription</keyword>
<keyword id="KW-0805">Transcription regulation</keyword>
<proteinExistence type="evidence at protein level"/>
<evidence type="ECO:0000305" key="1"/>
<evidence type="ECO:0007829" key="2">
    <source>
        <dbReference type="PDB" id="3ZZS"/>
    </source>
</evidence>
<dbReference type="EMBL" id="AF139535">
    <property type="protein sequence ID" value="AAD33793.1"/>
    <property type="molecule type" value="Genomic_DNA"/>
</dbReference>
<dbReference type="RefSeq" id="WP_033013997.1">
    <property type="nucleotide sequence ID" value="NZ_RCTK01000002.1"/>
</dbReference>
<dbReference type="PDB" id="1C9S">
    <property type="method" value="X-ray"/>
    <property type="resolution" value="1.90 A"/>
    <property type="chains" value="A/B/C/D/E/F/G/H/I/J/K/L/M/N/O/P/Q/R/S/T/U/V=1-74"/>
</dbReference>
<dbReference type="PDB" id="1GTF">
    <property type="method" value="X-ray"/>
    <property type="resolution" value="1.75 A"/>
    <property type="chains" value="A/B/C/D/E/F/G/H/I/J/K/L/M/N/O/P/Q/R/S/T/U/V=1-74"/>
</dbReference>
<dbReference type="PDB" id="1GTN">
    <property type="method" value="X-ray"/>
    <property type="resolution" value="2.50 A"/>
    <property type="chains" value="A/B/C/D/E/F/G/H/I/J/K/L/M/N/O/P/Q/R/S/T/U/V=1-74"/>
</dbReference>
<dbReference type="PDB" id="1QAW">
    <property type="method" value="X-ray"/>
    <property type="resolution" value="2.50 A"/>
    <property type="chains" value="A/B/C/D/E/F/G/H/I/J/K=1-74"/>
</dbReference>
<dbReference type="PDB" id="1UTD">
    <property type="method" value="X-ray"/>
    <property type="resolution" value="2.10 A"/>
    <property type="chains" value="A/B/C/D/E/F/G/H/I/J/K/L/M/N/O/P/Q/R/S/T/U/V=1-74"/>
</dbReference>
<dbReference type="PDB" id="2EXS">
    <property type="method" value="X-ray"/>
    <property type="resolution" value="2.00 A"/>
    <property type="chains" value="A/B/C=2-74"/>
</dbReference>
<dbReference type="PDB" id="2EXT">
    <property type="method" value="X-ray"/>
    <property type="resolution" value="1.80 A"/>
    <property type="chains" value="A/B/C=2-74"/>
</dbReference>
<dbReference type="PDB" id="2ZCZ">
    <property type="method" value="X-ray"/>
    <property type="resolution" value="1.80 A"/>
    <property type="chains" value="A/B/C/D/E/F=1-74"/>
</dbReference>
<dbReference type="PDB" id="2ZD0">
    <property type="method" value="X-ray"/>
    <property type="resolution" value="2.50 A"/>
    <property type="chains" value="A/B/C=1-74"/>
</dbReference>
<dbReference type="PDB" id="2ZP8">
    <property type="method" value="X-ray"/>
    <property type="resolution" value="3.20 A"/>
    <property type="chains" value="A/B/C/D=1-74"/>
</dbReference>
<dbReference type="PDB" id="2ZP9">
    <property type="method" value="X-ray"/>
    <property type="resolution" value="3.20 A"/>
    <property type="chains" value="A/B/F/G/K/L=1-74"/>
</dbReference>
<dbReference type="PDB" id="3AQD">
    <property type="method" value="X-ray"/>
    <property type="resolution" value="3.20 A"/>
    <property type="chains" value="A/B/C/D/E/F/G/H/I/J/K/L/M/N/O/P/Q/R/S/T/U/V=1-74"/>
</dbReference>
<dbReference type="PDB" id="3ZZS">
    <property type="method" value="X-ray"/>
    <property type="resolution" value="1.49 A"/>
    <property type="chains" value="A/B/C/D/E/F/G/H/I=5-69"/>
</dbReference>
<dbReference type="PDB" id="4V4F">
    <property type="method" value="X-ray"/>
    <property type="resolution" value="1.90 A"/>
    <property type="chains" value="AA/AB/AC/AD/AE/AF/AG/AH/AI/AJ/AK/AL/AM/AN/AO/AP/AQ/AR/AS/AT/AU/AV/BA/BB/BC/BD/BE/BF/BG/BH/BI/BJ/BK/BL/BM/BN/BO/BP/BQ/BR/BS/BT/BU/BV=1-74"/>
</dbReference>
<dbReference type="PDB" id="5EEU">
    <property type="method" value="X-ray"/>
    <property type="resolution" value="1.98 A"/>
    <property type="chains" value="A/B/C/D/E/F/G/H/I/J/K/L/M/N/O/P/Q/R/S/T/U/V=1-74"/>
</dbReference>
<dbReference type="PDB" id="5EEV">
    <property type="method" value="X-ray"/>
    <property type="resolution" value="1.98 A"/>
    <property type="chains" value="A/B/C/D/E/F/G/H/I/J/K/L/M/N/O/P/Q/R/S/T/U/V=1-74"/>
</dbReference>
<dbReference type="PDB" id="5EEW">
    <property type="method" value="X-ray"/>
    <property type="resolution" value="1.98 A"/>
    <property type="chains" value="A/B/C/D/E/F/G/H/I/J/K/L/M/N/O/P/Q/R/S/T/U/V=1-74"/>
</dbReference>
<dbReference type="PDB" id="5EEX">
    <property type="method" value="X-ray"/>
    <property type="resolution" value="1.98 A"/>
    <property type="chains" value="A/B/C/D/E/F/G/H/I/J/K/L/M/N/O/P/Q/R/S/T/U/V=1-74"/>
</dbReference>
<dbReference type="PDB" id="5EEY">
    <property type="method" value="X-ray"/>
    <property type="resolution" value="1.98 A"/>
    <property type="chains" value="A/B/C/D/E/F/G/H/I/J/K/L/M/N/O/P/Q/R/S/T/U/V=1-74"/>
</dbReference>
<dbReference type="PDB" id="5EEZ">
    <property type="method" value="X-ray"/>
    <property type="resolution" value="1.98 A"/>
    <property type="chains" value="A/B/C/D/E/F/G/H/I/J/K/L/M/N/O/P/Q/R/S/T/U/V=1-74"/>
</dbReference>
<dbReference type="PDB" id="5EF0">
    <property type="method" value="X-ray"/>
    <property type="resolution" value="1.98 A"/>
    <property type="chains" value="A/B/C/D/E/F/G/H/I/J/K/L/M/N/O/P/Q/R/S/T/U/V=1-74"/>
</dbReference>
<dbReference type="PDB" id="5EF1">
    <property type="method" value="X-ray"/>
    <property type="resolution" value="1.98 A"/>
    <property type="chains" value="A/B/C/D/E/F/G/H/I/J/K/L/M/N/O/P/Q/R/S/T/U/V=1-74"/>
</dbReference>
<dbReference type="PDB" id="5EF2">
    <property type="method" value="X-ray"/>
    <property type="resolution" value="1.98 A"/>
    <property type="chains" value="A/B/C/D/E/F/G/H/I/J/K/L/M/N/O/P/Q/R/S/T/U/V=1-74"/>
</dbReference>
<dbReference type="PDB" id="5EF3">
    <property type="method" value="X-ray"/>
    <property type="resolution" value="1.98 A"/>
    <property type="chains" value="A/B/C/D/E/F/G/H/I/J/K/L/M/N/O/P/Q/R/S/T/U/V=1-74"/>
</dbReference>
<dbReference type="PDB" id="6RVV">
    <property type="method" value="EM"/>
    <property type="resolution" value="3.70 A"/>
    <property type="chains" value="AA/AB/AC/AD/AE/AF/AG/AH/AI/AJ/AK/BA/BB/BC/BD/BE/BF/BG/BH/BI/BJ/BK/CA/CB/CC/CD/CE/CF/CG/CH=1-74"/>
</dbReference>
<dbReference type="PDB" id="6RVW">
    <property type="method" value="EM"/>
    <property type="resolution" value="3.70 A"/>
    <property type="chains" value="AA/AB/AC/AD/AE/AF/AG/AH/AI/AJ/AK/BA/BB/BC/BD/BE/BF/BG/BH/BI/BJ/BK/CA/CB/CC/CD/CE/CF/CG/CH=1-74"/>
</dbReference>
<dbReference type="PDB" id="8R59">
    <property type="method" value="EM"/>
    <property type="resolution" value="2.86 A"/>
    <property type="chains" value="0/0A/0B/0C/1/1A/1B/1C/2/2A/2B/2C/3/3A/3B/3C/4/4A/4B/4C/5/5A/5B/5C/6/6A/6B/6C/7/7A=1-74"/>
</dbReference>
<dbReference type="PDB" id="8R5A">
    <property type="method" value="EM"/>
    <property type="resolution" value="2.84 A"/>
    <property type="chains" value="0/0A/0B/0C/1/1A/1B/1C/2/2A/2B/2C/3/3A/3B/3C/4/4A/4B/4C/5/5A/5B/5C/6/6A/6B/6C/7/7A=1-74"/>
</dbReference>
<dbReference type="PDBsum" id="1C9S"/>
<dbReference type="PDBsum" id="1GTF"/>
<dbReference type="PDBsum" id="1GTN"/>
<dbReference type="PDBsum" id="1QAW"/>
<dbReference type="PDBsum" id="1UTD"/>
<dbReference type="PDBsum" id="2EXS"/>
<dbReference type="PDBsum" id="2EXT"/>
<dbReference type="PDBsum" id="2ZCZ"/>
<dbReference type="PDBsum" id="2ZD0"/>
<dbReference type="PDBsum" id="2ZP8"/>
<dbReference type="PDBsum" id="2ZP9"/>
<dbReference type="PDBsum" id="3AQD"/>
<dbReference type="PDBsum" id="3ZZS"/>
<dbReference type="PDBsum" id="4V4F"/>
<dbReference type="PDBsum" id="5EEU"/>
<dbReference type="PDBsum" id="5EEV"/>
<dbReference type="PDBsum" id="5EEW"/>
<dbReference type="PDBsum" id="5EEX"/>
<dbReference type="PDBsum" id="5EEY"/>
<dbReference type="PDBsum" id="5EEZ"/>
<dbReference type="PDBsum" id="5EF0"/>
<dbReference type="PDBsum" id="5EF1"/>
<dbReference type="PDBsum" id="5EF2"/>
<dbReference type="PDBsum" id="5EF3"/>
<dbReference type="PDBsum" id="6RVV"/>
<dbReference type="PDBsum" id="6RVW"/>
<dbReference type="PDBsum" id="8R59"/>
<dbReference type="PDBsum" id="8R5A"/>
<dbReference type="BMRB" id="Q9X6J6"/>
<dbReference type="EMDB" id="EMD-11413"/>
<dbReference type="EMDB" id="EMD-11415"/>
<dbReference type="EMDB" id="EMD-12526"/>
<dbReference type="EMDB" id="EMD-13924"/>
<dbReference type="EMDB" id="EMD-17195"/>
<dbReference type="EMDB" id="EMD-18904"/>
<dbReference type="EMDB" id="EMD-18905"/>
<dbReference type="EMDB" id="EMD-18906"/>
<dbReference type="EMDB" id="EMD-18907"/>
<dbReference type="EMDB" id="EMD-18908"/>
<dbReference type="EMDB" id="EMD-18909"/>
<dbReference type="EMDB" id="EMD-4443"/>
<dbReference type="EMDB" id="EMD-4444"/>
<dbReference type="EMDB" id="EMD-6966"/>
<dbReference type="SMR" id="Q9X6J6"/>
<dbReference type="DIP" id="DIP-29104N"/>
<dbReference type="IntAct" id="Q9X6J6">
    <property type="interactions" value="1"/>
</dbReference>
<dbReference type="GeneID" id="89611869"/>
<dbReference type="OrthoDB" id="2111980at2"/>
<dbReference type="EvolutionaryTrace" id="Q9X6J6"/>
<dbReference type="GO" id="GO:0042802">
    <property type="term" value="F:identical protein binding"/>
    <property type="evidence" value="ECO:0000353"/>
    <property type="project" value="IntAct"/>
</dbReference>
<dbReference type="GO" id="GO:0003723">
    <property type="term" value="F:RNA binding"/>
    <property type="evidence" value="ECO:0007669"/>
    <property type="project" value="UniProtKB-UniRule"/>
</dbReference>
<dbReference type="GO" id="GO:0006353">
    <property type="term" value="P:DNA-templated transcription termination"/>
    <property type="evidence" value="ECO:0007669"/>
    <property type="project" value="InterPro"/>
</dbReference>
<dbReference type="GO" id="GO:0006355">
    <property type="term" value="P:regulation of DNA-templated transcription"/>
    <property type="evidence" value="ECO:0007669"/>
    <property type="project" value="InterPro"/>
</dbReference>
<dbReference type="FunFam" id="2.60.40.50:FF:000001">
    <property type="entry name" value="Transcription attenuation protein MtrB"/>
    <property type="match status" value="1"/>
</dbReference>
<dbReference type="Gene3D" id="2.60.40.50">
    <property type="entry name" value="TRAP-like"/>
    <property type="match status" value="1"/>
</dbReference>
<dbReference type="HAMAP" id="MF_00798">
    <property type="entry name" value="Trp_attenuator"/>
    <property type="match status" value="1"/>
</dbReference>
<dbReference type="InterPro" id="IPR000824">
    <property type="entry name" value="MtrB"/>
</dbReference>
<dbReference type="InterPro" id="IPR016031">
    <property type="entry name" value="Trp_RNA-bd_attenuator-like_dom"/>
</dbReference>
<dbReference type="InterPro" id="IPR023558">
    <property type="entry name" value="Trp_RNA-bd_attenuator_dom"/>
</dbReference>
<dbReference type="NCBIfam" id="NF009724">
    <property type="entry name" value="PRK13251.1"/>
    <property type="match status" value="1"/>
</dbReference>
<dbReference type="Pfam" id="PF02081">
    <property type="entry name" value="TrpBP"/>
    <property type="match status" value="1"/>
</dbReference>
<dbReference type="PRINTS" id="PR00687">
    <property type="entry name" value="TRPRNAAP"/>
</dbReference>
<dbReference type="SUPFAM" id="SSF51219">
    <property type="entry name" value="TRAP-like"/>
    <property type="match status" value="1"/>
</dbReference>
<sequence>MYTNSDFVVIKALEDGVNVIGLTRGADTRFHHSEKLDKGEVLIAQFTEHTSAIKVRGKAYIQTRHGVIESEGKK</sequence>
<reference key="1">
    <citation type="journal article" date="1999" name="J. Mol. Biol.">
        <title>Regulatory features of the trp operon and the crystal structure of the trp RNA-binding attenuation protein from Bacillus stearothermophilus.</title>
        <authorList>
            <person name="Chen X.-P."/>
            <person name="Antson A.A."/>
            <person name="Yang M."/>
            <person name="Baumann C."/>
            <person name="Dodson E.J."/>
            <person name="Dodson G.G."/>
            <person name="Gollnick P."/>
        </authorList>
    </citation>
    <scope>NUCLEOTIDE SEQUENCE [GENOMIC DNA]</scope>
    <scope>X-RAY CRYSTALLOGRAPHY (2.5 ANGSTROMS)</scope>
    <source>
        <strain>ATCC 12980 / NCA 26</strain>
    </source>
</reference>
<name>MTRB_GEOSE</name>